<keyword id="KW-0349">Heme</keyword>
<keyword id="KW-0408">Iron</keyword>
<keyword id="KW-0479">Metal-binding</keyword>
<keyword id="KW-0503">Monooxygenase</keyword>
<keyword id="KW-0560">Oxidoreductase</keyword>
<accession>Q12645</accession>
<accession>Q02289</accession>
<comment type="function">
    <text>Can detoxify the phytoalexin pisatin from garden pea. Pisatin is an antimicrobial compound produced by pea in response to infection by plant pathogens.</text>
</comment>
<comment type="cofactor">
    <cofactor evidence="1">
        <name>heme</name>
        <dbReference type="ChEBI" id="CHEBI:30413"/>
    </cofactor>
</comment>
<comment type="similarity">
    <text evidence="2">Belongs to the cytochrome P450 family.</text>
</comment>
<proteinExistence type="inferred from homology"/>
<evidence type="ECO:0000250" key="1"/>
<evidence type="ECO:0000305" key="2"/>
<sequence length="515" mass="58186">MLVDTGLGLISELQAKLGWAVLLQIVPITIVAYNLLWFIYASFFSSLRKIPGPFLARISRVWEMKKTATGNIHEIMMDLHRRHGAIVRIGPRRYDFDTMEALKIIYRIGNALPKADYYKPFGLPSFPNLFDEQNPARHSAIKKQVASLYTMTALLSYEEGVDGQTAILKEQLQRFCDQKQVIDLPRFLQYYAFDVIGVITVGKSMGMMESNSDTNGACSALDGMWHYASMMAYIPNMHAWWLRLSSLLPIEVPIKGLTEYVERRIIQYRLKAAEFGDDAALKGENNFLAKLLLMEKKGTVTPVETQQAVGLNIGAGSDTTANALSTILYYLYTNPRTLHTLREELERYVKDGPISFQQSQSMPYLQAVIKEALRLHPGVGTQLTRVVPKGGLVIEGQFFPEGTEVGVNGWALYHNKAIFGNDASIFRPERWLEANENINIGGSFAFGAGSRSCIGKNISILEMSKAIPQIVRNFDIEINHGDMTWKNECWWFVKPEYKAMIKPRRCCLSRDESLV</sequence>
<name>PID9_FUSVN</name>
<dbReference type="EC" id="1.14.-.-"/>
<dbReference type="EMBL" id="L20976">
    <property type="protein sequence ID" value="AAC01762.1"/>
    <property type="molecule type" value="Genomic_DNA"/>
</dbReference>
<dbReference type="EMBL" id="S70757">
    <property type="status" value="NOT_ANNOTATED_CDS"/>
    <property type="molecule type" value="Genomic_DNA"/>
</dbReference>
<dbReference type="PIR" id="S45583">
    <property type="entry name" value="S45583"/>
</dbReference>
<dbReference type="SMR" id="Q12645"/>
<dbReference type="VEuPathDB" id="FungiDB:NECHADRAFT_64937"/>
<dbReference type="OMA" id="ESMMFAF"/>
<dbReference type="BioCyc" id="MetaCyc:MONOMER-19130"/>
<dbReference type="GO" id="GO:0020037">
    <property type="term" value="F:heme binding"/>
    <property type="evidence" value="ECO:0007669"/>
    <property type="project" value="InterPro"/>
</dbReference>
<dbReference type="GO" id="GO:0005506">
    <property type="term" value="F:iron ion binding"/>
    <property type="evidence" value="ECO:0007669"/>
    <property type="project" value="InterPro"/>
</dbReference>
<dbReference type="GO" id="GO:0004497">
    <property type="term" value="F:monooxygenase activity"/>
    <property type="evidence" value="ECO:0007669"/>
    <property type="project" value="UniProtKB-KW"/>
</dbReference>
<dbReference type="GO" id="GO:0016705">
    <property type="term" value="F:oxidoreductase activity, acting on paired donors, with incorporation or reduction of molecular oxygen"/>
    <property type="evidence" value="ECO:0007669"/>
    <property type="project" value="InterPro"/>
</dbReference>
<dbReference type="CDD" id="cd11060">
    <property type="entry name" value="CYP57A1-like"/>
    <property type="match status" value="1"/>
</dbReference>
<dbReference type="Gene3D" id="1.10.630.10">
    <property type="entry name" value="Cytochrome P450"/>
    <property type="match status" value="1"/>
</dbReference>
<dbReference type="InterPro" id="IPR001128">
    <property type="entry name" value="Cyt_P450"/>
</dbReference>
<dbReference type="InterPro" id="IPR017972">
    <property type="entry name" value="Cyt_P450_CS"/>
</dbReference>
<dbReference type="InterPro" id="IPR002401">
    <property type="entry name" value="Cyt_P450_E_grp-I"/>
</dbReference>
<dbReference type="InterPro" id="IPR036396">
    <property type="entry name" value="Cyt_P450_sf"/>
</dbReference>
<dbReference type="InterPro" id="IPR050121">
    <property type="entry name" value="Cytochrome_P450_monoxygenase"/>
</dbReference>
<dbReference type="PANTHER" id="PTHR24305">
    <property type="entry name" value="CYTOCHROME P450"/>
    <property type="match status" value="1"/>
</dbReference>
<dbReference type="PANTHER" id="PTHR24305:SF190">
    <property type="entry name" value="P450, PUTATIVE (EUROFUNG)-RELATED"/>
    <property type="match status" value="1"/>
</dbReference>
<dbReference type="Pfam" id="PF00067">
    <property type="entry name" value="p450"/>
    <property type="match status" value="1"/>
</dbReference>
<dbReference type="PRINTS" id="PR00463">
    <property type="entry name" value="EP450I"/>
</dbReference>
<dbReference type="PRINTS" id="PR00385">
    <property type="entry name" value="P450"/>
</dbReference>
<dbReference type="SUPFAM" id="SSF48264">
    <property type="entry name" value="Cytochrome P450"/>
    <property type="match status" value="1"/>
</dbReference>
<dbReference type="PROSITE" id="PS00086">
    <property type="entry name" value="CYTOCHROME_P450"/>
    <property type="match status" value="1"/>
</dbReference>
<gene>
    <name type="primary">PDAT9</name>
    <name type="synonym">CYP57A1</name>
    <name type="synonym">PDA1</name>
</gene>
<feature type="chain" id="PRO_0000052043" description="Pisatin demethylase">
    <location>
        <begin position="1"/>
        <end position="515"/>
    </location>
</feature>
<feature type="binding site" description="axial binding residue" evidence="1">
    <location>
        <position position="453"/>
    </location>
    <ligand>
        <name>heme</name>
        <dbReference type="ChEBI" id="CHEBI:30413"/>
    </ligand>
    <ligandPart>
        <name>Fe</name>
        <dbReference type="ChEBI" id="CHEBI:18248"/>
    </ligandPart>
</feature>
<organism>
    <name type="scientific">Fusarium vanettenii</name>
    <name type="common">Neocosmospora pisi</name>
    <dbReference type="NCBI Taxonomy" id="2747968"/>
    <lineage>
        <taxon>Eukaryota</taxon>
        <taxon>Fungi</taxon>
        <taxon>Dikarya</taxon>
        <taxon>Ascomycota</taxon>
        <taxon>Pezizomycotina</taxon>
        <taxon>Sordariomycetes</taxon>
        <taxon>Hypocreomycetidae</taxon>
        <taxon>Hypocreales</taxon>
        <taxon>Nectriaceae</taxon>
        <taxon>Fusarium</taxon>
        <taxon>Fusarium solani species complex</taxon>
    </lineage>
</organism>
<protein>
    <recommendedName>
        <fullName>Pisatin demethylase</fullName>
        <ecNumber>1.14.-.-</ecNumber>
    </recommendedName>
    <alternativeName>
        <fullName>Cytochrome P450 57A1</fullName>
    </alternativeName>
</protein>
<reference key="1">
    <citation type="journal article" date="1994" name="Mol. Gen. Genet.">
        <title>A gene from the fungal plant pathogen Nectria haematococca that encodes the phytoalexin-detoxifying enzyme pisatin demethylase defines a new cytochrome P450 family.</title>
        <authorList>
            <person name="Maloney A.P."/>
            <person name="Vanetten H.D."/>
        </authorList>
    </citation>
    <scope>NUCLEOTIDE SEQUENCE [GENOMIC DNA]</scope>
    <source>
        <strain>T9</strain>
    </source>
</reference>
<reference key="2">
    <citation type="journal article" date="1994" name="Mol. Plant Microbe Interact.">
        <title>Characterization of the PDA1 promoter of Nectria haematococca and identification of a region that binds a pisatin-responsive DNA binding factor.</title>
        <authorList>
            <person name="Straney D.C."/>
            <person name="Vanetten H.D."/>
        </authorList>
    </citation>
    <scope>NUCLEOTIDE SEQUENCE [GENOMIC DNA] OF 1-60</scope>
</reference>